<organism>
    <name type="scientific">Mycobacterium tuberculosis (strain ATCC 25618 / H37Rv)</name>
    <dbReference type="NCBI Taxonomy" id="83332"/>
    <lineage>
        <taxon>Bacteria</taxon>
        <taxon>Bacillati</taxon>
        <taxon>Actinomycetota</taxon>
        <taxon>Actinomycetes</taxon>
        <taxon>Mycobacteriales</taxon>
        <taxon>Mycobacteriaceae</taxon>
        <taxon>Mycobacterium</taxon>
        <taxon>Mycobacterium tuberculosis complex</taxon>
    </lineage>
</organism>
<accession>P9WN85</accession>
<accession>F2GIN3</accession>
<accession>L0TC35</accession>
<accession>O05839</accession>
<accession>Q7D799</accession>
<name>ZUR_MYCTU</name>
<evidence type="ECO:0000250" key="1"/>
<evidence type="ECO:0000269" key="2">
    <source>
    </source>
</evidence>
<evidence type="ECO:0000269" key="3">
    <source>
    </source>
</evidence>
<evidence type="ECO:0000269" key="4">
    <source>
    </source>
</evidence>
<evidence type="ECO:0000269" key="5">
    <source>
    </source>
</evidence>
<evidence type="ECO:0000305" key="6"/>
<evidence type="ECO:0007829" key="7">
    <source>
        <dbReference type="PDB" id="2O03"/>
    </source>
</evidence>
<proteinExistence type="evidence at protein level"/>
<reference key="1">
    <citation type="journal article" date="1998" name="Nature">
        <title>Deciphering the biology of Mycobacterium tuberculosis from the complete genome sequence.</title>
        <authorList>
            <person name="Cole S.T."/>
            <person name="Brosch R."/>
            <person name="Parkhill J."/>
            <person name="Garnier T."/>
            <person name="Churcher C.M."/>
            <person name="Harris D.E."/>
            <person name="Gordon S.V."/>
            <person name="Eiglmeier K."/>
            <person name="Gas S."/>
            <person name="Barry C.E. III"/>
            <person name="Tekaia F."/>
            <person name="Badcock K."/>
            <person name="Basham D."/>
            <person name="Brown D."/>
            <person name="Chillingworth T."/>
            <person name="Connor R."/>
            <person name="Davies R.M."/>
            <person name="Devlin K."/>
            <person name="Feltwell T."/>
            <person name="Gentles S."/>
            <person name="Hamlin N."/>
            <person name="Holroyd S."/>
            <person name="Hornsby T."/>
            <person name="Jagels K."/>
            <person name="Krogh A."/>
            <person name="McLean J."/>
            <person name="Moule S."/>
            <person name="Murphy L.D."/>
            <person name="Oliver S."/>
            <person name="Osborne J."/>
            <person name="Quail M.A."/>
            <person name="Rajandream M.A."/>
            <person name="Rogers J."/>
            <person name="Rutter S."/>
            <person name="Seeger K."/>
            <person name="Skelton S."/>
            <person name="Squares S."/>
            <person name="Squares R."/>
            <person name="Sulston J.E."/>
            <person name="Taylor K."/>
            <person name="Whitehead S."/>
            <person name="Barrell B.G."/>
        </authorList>
    </citation>
    <scope>NUCLEOTIDE SEQUENCE [LARGE SCALE GENOMIC DNA]</scope>
    <source>
        <strain>ATCC 25618 / H37Rv</strain>
    </source>
</reference>
<reference key="2">
    <citation type="journal article" date="2004" name="Res. Microbiol.">
        <title>The Mycobacterium tuberculosis Rv2358-furB operon is induced by zinc.</title>
        <authorList>
            <person name="Milano A."/>
            <person name="Branzoni M."/>
            <person name="Canneva F."/>
            <person name="Profumo A."/>
            <person name="Riccardi G."/>
        </authorList>
    </citation>
    <scope>INDUCTION</scope>
    <scope>COFACTOR</scope>
    <scope>ZINC-BINDING</scope>
    <source>
        <strain>ATCC 25618 / H37Rv</strain>
    </source>
</reference>
<reference key="3">
    <citation type="journal article" date="2005" name="J. Bacteriol.">
        <title>Rv2358 and FurB: two transcriptional regulators from Mycobacterium tuberculosis which respond to zinc.</title>
        <authorList>
            <person name="Canneva F."/>
            <person name="Branzoni M."/>
            <person name="Riccardi G."/>
            <person name="Provvedi R."/>
            <person name="Milano A."/>
        </authorList>
    </citation>
    <scope>INDUCTION</scope>
</reference>
<reference key="4">
    <citation type="journal article" date="2007" name="J. Bacteriol.">
        <title>Global analysis of the Mycobacterium tuberculosis Zur (FurB) regulon.</title>
        <authorList>
            <person name="Maciag A."/>
            <person name="Dainese E."/>
            <person name="Rodriguez G.M."/>
            <person name="Milano A."/>
            <person name="Provvedi R."/>
            <person name="Pasca M.R."/>
            <person name="Smith I."/>
            <person name="Palu G."/>
            <person name="Riccardi G."/>
            <person name="Manganelli R."/>
        </authorList>
    </citation>
    <scope>FUNCTION</scope>
    <scope>DNA-BINDING</scope>
    <scope>COFACTOR</scope>
    <scope>GENE NAME</scope>
    <source>
        <strain>ATCC 25618 / H37Rv</strain>
    </source>
</reference>
<reference key="5">
    <citation type="journal article" date="2011" name="Mol. Cell. Proteomics">
        <title>Proteogenomic analysis of Mycobacterium tuberculosis by high resolution mass spectrometry.</title>
        <authorList>
            <person name="Kelkar D.S."/>
            <person name="Kumar D."/>
            <person name="Kumar P."/>
            <person name="Balakrishnan L."/>
            <person name="Muthusamy B."/>
            <person name="Yadav A.K."/>
            <person name="Shrivastava P."/>
            <person name="Marimuthu A."/>
            <person name="Anand S."/>
            <person name="Sundaram H."/>
            <person name="Kingsbury R."/>
            <person name="Harsha H.C."/>
            <person name="Nair B."/>
            <person name="Prasad T.S."/>
            <person name="Chauhan D.S."/>
            <person name="Katoch K."/>
            <person name="Katoch V.M."/>
            <person name="Kumar P."/>
            <person name="Chaerkady R."/>
            <person name="Ramachandran S."/>
            <person name="Dash D."/>
            <person name="Pandey A."/>
        </authorList>
    </citation>
    <scope>IDENTIFICATION BY MASS SPECTROMETRY [LARGE SCALE ANALYSIS]</scope>
    <source>
        <strain>ATCC 25618 / H37Rv</strain>
    </source>
</reference>
<reference key="6">
    <citation type="journal article" date="2007" name="J. Biol. Chem.">
        <title>Crystal structure and function of the zinc uptake regulator FurB from Mycobacterium tuberculosis.</title>
        <authorList>
            <person name="Lucarelli D."/>
            <person name="Russo S."/>
            <person name="Garman E."/>
            <person name="Milano A."/>
            <person name="Meyer-Klaucke W."/>
            <person name="Pohl E."/>
        </authorList>
    </citation>
    <scope>X-RAY CRYSTALLOGRAPHY (2.70 ANGSTROMS) OF 2-130 IN COMPLEX WITH ZINC</scope>
    <scope>COFACTOR</scope>
    <scope>SUBUNIT</scope>
    <scope>DOMAIN</scope>
    <source>
        <strain>ATCC 25618 / H37Rv</strain>
    </source>
</reference>
<sequence length="130" mass="14398">MSAAGVRSTRQRAAISTLLETLDDFRSAQELHDELRRRGENIGLTTVYRTLQSMASSGLVDTLHTDTGESVYRRCSEHHHHHLVCRSCGSTIEVGDHEVEAWAAEVATKHGFSDVSHTIEIFGTCSDCRS</sequence>
<gene>
    <name type="primary">zur</name>
    <name type="synonym">fur-2</name>
    <name type="synonym">furB</name>
    <name type="ordered locus">Rv2359</name>
</gene>
<protein>
    <recommendedName>
        <fullName>Zinc uptake regulation protein</fullName>
        <shortName>Zinc uptake regulator</shortName>
    </recommendedName>
</protein>
<dbReference type="EMBL" id="AL123456">
    <property type="protein sequence ID" value="CCP45147.1"/>
    <property type="molecule type" value="Genomic_DNA"/>
</dbReference>
<dbReference type="PIR" id="F70585">
    <property type="entry name" value="F70585"/>
</dbReference>
<dbReference type="RefSeq" id="NP_216875.1">
    <property type="nucleotide sequence ID" value="NC_000962.3"/>
</dbReference>
<dbReference type="RefSeq" id="WP_003899290.1">
    <property type="nucleotide sequence ID" value="NZ_NVQJ01000029.1"/>
</dbReference>
<dbReference type="PDB" id="2O03">
    <property type="method" value="X-ray"/>
    <property type="resolution" value="2.70 A"/>
    <property type="chains" value="A=2-130"/>
</dbReference>
<dbReference type="PDBsum" id="2O03"/>
<dbReference type="SMR" id="P9WN85"/>
<dbReference type="FunCoup" id="P9WN85">
    <property type="interactions" value="47"/>
</dbReference>
<dbReference type="STRING" id="83332.Rv2359"/>
<dbReference type="PaxDb" id="83332-Rv2359"/>
<dbReference type="DNASU" id="886009"/>
<dbReference type="GeneID" id="886009"/>
<dbReference type="KEGG" id="mtu:Rv2359"/>
<dbReference type="KEGG" id="mtv:RVBD_2359"/>
<dbReference type="TubercuList" id="Rv2359"/>
<dbReference type="eggNOG" id="COG0735">
    <property type="taxonomic scope" value="Bacteria"/>
</dbReference>
<dbReference type="InParanoid" id="P9WN85"/>
<dbReference type="OrthoDB" id="8659436at2"/>
<dbReference type="PhylomeDB" id="P9WN85"/>
<dbReference type="EvolutionaryTrace" id="P9WN85"/>
<dbReference type="Proteomes" id="UP000001584">
    <property type="component" value="Chromosome"/>
</dbReference>
<dbReference type="CollecTF" id="EXPREG_00000c60"/>
<dbReference type="GO" id="GO:0005829">
    <property type="term" value="C:cytosol"/>
    <property type="evidence" value="ECO:0000318"/>
    <property type="project" value="GO_Central"/>
</dbReference>
<dbReference type="GO" id="GO:0005886">
    <property type="term" value="C:plasma membrane"/>
    <property type="evidence" value="ECO:0007005"/>
    <property type="project" value="MTBBASE"/>
</dbReference>
<dbReference type="GO" id="GO:0032993">
    <property type="term" value="C:protein-DNA complex"/>
    <property type="evidence" value="ECO:0000353"/>
    <property type="project" value="CollecTF"/>
</dbReference>
<dbReference type="GO" id="GO:0003700">
    <property type="term" value="F:DNA-binding transcription factor activity"/>
    <property type="evidence" value="ECO:0000318"/>
    <property type="project" value="GO_Central"/>
</dbReference>
<dbReference type="GO" id="GO:0001217">
    <property type="term" value="F:DNA-binding transcription repressor activity"/>
    <property type="evidence" value="ECO:0000353"/>
    <property type="project" value="CollecTF"/>
</dbReference>
<dbReference type="GO" id="GO:0042803">
    <property type="term" value="F:protein homodimerization activity"/>
    <property type="evidence" value="ECO:0000353"/>
    <property type="project" value="MTBBASE"/>
</dbReference>
<dbReference type="GO" id="GO:0000976">
    <property type="term" value="F:transcription cis-regulatory region binding"/>
    <property type="evidence" value="ECO:0000353"/>
    <property type="project" value="CollecTF"/>
</dbReference>
<dbReference type="GO" id="GO:0008270">
    <property type="term" value="F:zinc ion binding"/>
    <property type="evidence" value="ECO:0000314"/>
    <property type="project" value="MTBBASE"/>
</dbReference>
<dbReference type="GO" id="GO:0045892">
    <property type="term" value="P:negative regulation of DNA-templated transcription"/>
    <property type="evidence" value="ECO:0000269"/>
    <property type="project" value="CollecTF"/>
</dbReference>
<dbReference type="GO" id="GO:0045893">
    <property type="term" value="P:positive regulation of DNA-templated transcription"/>
    <property type="evidence" value="ECO:0000314"/>
    <property type="project" value="MTBBASE"/>
</dbReference>
<dbReference type="GO" id="GO:1900376">
    <property type="term" value="P:regulation of secondary metabolite biosynthetic process"/>
    <property type="evidence" value="ECO:0000318"/>
    <property type="project" value="GO_Central"/>
</dbReference>
<dbReference type="GO" id="GO:0010043">
    <property type="term" value="P:response to zinc ion"/>
    <property type="evidence" value="ECO:0000316"/>
    <property type="project" value="MTBBASE"/>
</dbReference>
<dbReference type="CDD" id="cd07153">
    <property type="entry name" value="Fur_like"/>
    <property type="match status" value="1"/>
</dbReference>
<dbReference type="FunFam" id="1.10.10.10:FF:000459">
    <property type="entry name" value="Ferric uptake regulation protein"/>
    <property type="match status" value="1"/>
</dbReference>
<dbReference type="FunFam" id="3.30.1490.190:FF:000006">
    <property type="entry name" value="Fur family transcriptional regulator"/>
    <property type="match status" value="1"/>
</dbReference>
<dbReference type="Gene3D" id="3.30.1490.190">
    <property type="match status" value="1"/>
</dbReference>
<dbReference type="Gene3D" id="1.10.10.10">
    <property type="entry name" value="Winged helix-like DNA-binding domain superfamily/Winged helix DNA-binding domain"/>
    <property type="match status" value="1"/>
</dbReference>
<dbReference type="InterPro" id="IPR002481">
    <property type="entry name" value="FUR"/>
</dbReference>
<dbReference type="InterPro" id="IPR043135">
    <property type="entry name" value="Fur_C"/>
</dbReference>
<dbReference type="InterPro" id="IPR036388">
    <property type="entry name" value="WH-like_DNA-bd_sf"/>
</dbReference>
<dbReference type="InterPro" id="IPR036390">
    <property type="entry name" value="WH_DNA-bd_sf"/>
</dbReference>
<dbReference type="PANTHER" id="PTHR33202:SF2">
    <property type="entry name" value="FERRIC UPTAKE REGULATION PROTEIN"/>
    <property type="match status" value="1"/>
</dbReference>
<dbReference type="PANTHER" id="PTHR33202">
    <property type="entry name" value="ZINC UPTAKE REGULATION PROTEIN"/>
    <property type="match status" value="1"/>
</dbReference>
<dbReference type="Pfam" id="PF01475">
    <property type="entry name" value="FUR"/>
    <property type="match status" value="1"/>
</dbReference>
<dbReference type="SUPFAM" id="SSF46785">
    <property type="entry name" value="Winged helix' DNA-binding domain"/>
    <property type="match status" value="1"/>
</dbReference>
<feature type="chain" id="PRO_0000419204" description="Zinc uptake regulation protein">
    <location>
        <begin position="1"/>
        <end position="130"/>
    </location>
</feature>
<feature type="binding site" evidence="5">
    <location>
        <position position="61"/>
    </location>
    <ligand>
        <name>Zn(2+)</name>
        <dbReference type="ChEBI" id="CHEBI:29105"/>
        <label>1</label>
        <note>catalytic</note>
    </ligand>
</feature>
<feature type="binding site" evidence="5">
    <location>
        <position position="75"/>
    </location>
    <ligand>
        <name>Zn(2+)</name>
        <dbReference type="ChEBI" id="CHEBI:29105"/>
        <label>1</label>
        <note>catalytic</note>
    </ligand>
</feature>
<feature type="binding site" evidence="5">
    <location>
        <position position="79"/>
    </location>
    <ligand>
        <name>Zn(2+)</name>
        <dbReference type="ChEBI" id="CHEBI:29105"/>
        <label>3</label>
    </ligand>
</feature>
<feature type="binding site" evidence="5">
    <location>
        <position position="80"/>
    </location>
    <ligand>
        <name>Zn(2+)</name>
        <dbReference type="ChEBI" id="CHEBI:29105"/>
        <label>1</label>
        <note>catalytic</note>
    </ligand>
</feature>
<feature type="binding site" evidence="5">
    <location>
        <position position="81"/>
    </location>
    <ligand>
        <name>Zn(2+)</name>
        <dbReference type="ChEBI" id="CHEBI:29105"/>
        <label>3</label>
    </ligand>
</feature>
<feature type="binding site" evidence="5">
    <location>
        <position position="82"/>
    </location>
    <ligand>
        <name>Zn(2+)</name>
        <dbReference type="ChEBI" id="CHEBI:29105"/>
        <label>1</label>
        <note>catalytic</note>
    </ligand>
</feature>
<feature type="binding site" evidence="5">
    <location>
        <position position="85"/>
    </location>
    <ligand>
        <name>Zn(2+)</name>
        <dbReference type="ChEBI" id="CHEBI:29105"/>
        <label>2</label>
        <note>structural</note>
    </ligand>
</feature>
<feature type="binding site" evidence="5">
    <location>
        <position position="88"/>
    </location>
    <ligand>
        <name>Zn(2+)</name>
        <dbReference type="ChEBI" id="CHEBI:29105"/>
        <label>2</label>
        <note>structural</note>
    </ligand>
</feature>
<feature type="binding site" evidence="5">
    <location>
        <position position="100"/>
    </location>
    <ligand>
        <name>Zn(2+)</name>
        <dbReference type="ChEBI" id="CHEBI:29105"/>
        <label>3</label>
    </ligand>
</feature>
<feature type="binding site" evidence="5">
    <location>
        <position position="117"/>
    </location>
    <ligand>
        <name>Zn(2+)</name>
        <dbReference type="ChEBI" id="CHEBI:29105"/>
        <label>3</label>
    </ligand>
</feature>
<feature type="binding site" evidence="5">
    <location>
        <position position="125"/>
    </location>
    <ligand>
        <name>Zn(2+)</name>
        <dbReference type="ChEBI" id="CHEBI:29105"/>
        <label>2</label>
        <note>structural</note>
    </ligand>
</feature>
<feature type="binding site" evidence="5">
    <location>
        <position position="128"/>
    </location>
    <ligand>
        <name>Zn(2+)</name>
        <dbReference type="ChEBI" id="CHEBI:29105"/>
        <label>2</label>
        <note>structural</note>
    </ligand>
</feature>
<feature type="turn" evidence="7">
    <location>
        <begin position="2"/>
        <end position="4"/>
    </location>
</feature>
<feature type="helix" evidence="7">
    <location>
        <begin position="5"/>
        <end position="21"/>
    </location>
</feature>
<feature type="helix" evidence="7">
    <location>
        <begin position="28"/>
        <end position="37"/>
    </location>
</feature>
<feature type="helix" evidence="7">
    <location>
        <begin position="44"/>
        <end position="55"/>
    </location>
</feature>
<feature type="turn" evidence="7">
    <location>
        <begin position="56"/>
        <end position="58"/>
    </location>
</feature>
<feature type="strand" evidence="7">
    <location>
        <begin position="59"/>
        <end position="64"/>
    </location>
</feature>
<feature type="strand" evidence="7">
    <location>
        <begin position="70"/>
        <end position="74"/>
    </location>
</feature>
<feature type="strand" evidence="7">
    <location>
        <begin position="77"/>
        <end position="79"/>
    </location>
</feature>
<feature type="strand" evidence="7">
    <location>
        <begin position="81"/>
        <end position="85"/>
    </location>
</feature>
<feature type="turn" evidence="7">
    <location>
        <begin position="86"/>
        <end position="88"/>
    </location>
</feature>
<feature type="strand" evidence="7">
    <location>
        <begin position="91"/>
        <end position="94"/>
    </location>
</feature>
<feature type="helix" evidence="7">
    <location>
        <begin position="97"/>
        <end position="109"/>
    </location>
</feature>
<feature type="strand" evidence="7">
    <location>
        <begin position="120"/>
        <end position="123"/>
    </location>
</feature>
<feature type="turn" evidence="7">
    <location>
        <begin position="126"/>
        <end position="128"/>
    </location>
</feature>
<comment type="function">
    <text evidence="4">Global transcriptional regulator involved in zinc homeostasis. Represses the transcription of at least 32 genes, including genes involved in zinc homeostasis, by binding to promoter sequences that contain a conserved 26 bp palindrome, in the presence of zinc.</text>
</comment>
<comment type="cofactor">
    <cofactor evidence="2 4 5">
        <name>Zn(2+)</name>
        <dbReference type="ChEBI" id="CHEBI:29105"/>
    </cofactor>
    <text evidence="2 4 5">Binds 2 Zn(2+) ions per subunit. Three distinct zinc binding-sites were identified in the crystal structure, but the exact biological function of the third site remains to be determined. It could be an artifact of crystallization.</text>
</comment>
<comment type="subunit">
    <text evidence="5">Homodimer.</text>
</comment>
<comment type="subcellular location">
    <subcellularLocation>
        <location evidence="1">Cytoplasm</location>
    </subcellularLocation>
</comment>
<comment type="induction">
    <text evidence="2 3">Induced by zinc. Repressed by SmtB in the absence of zinc.</text>
</comment>
<comment type="domain">
    <text evidence="5">The N-terminal domain binds DNA and the C-terminal domain is involved in metal-binding and dimerization.</text>
</comment>
<comment type="similarity">
    <text evidence="6">Belongs to the Fur family.</text>
</comment>
<keyword id="KW-0002">3D-structure</keyword>
<keyword id="KW-0963">Cytoplasm</keyword>
<keyword id="KW-0238">DNA-binding</keyword>
<keyword id="KW-0479">Metal-binding</keyword>
<keyword id="KW-1185">Reference proteome</keyword>
<keyword id="KW-0678">Repressor</keyword>
<keyword id="KW-0804">Transcription</keyword>
<keyword id="KW-0805">Transcription regulation</keyword>
<keyword id="KW-0862">Zinc</keyword>